<protein>
    <recommendedName>
        <fullName>Uncharacterized protein L134</fullName>
    </recommendedName>
</protein>
<name>YL134_MIMIV</name>
<feature type="chain" id="PRO_0000247241" description="Uncharacterized protein L134">
    <location>
        <begin position="1"/>
        <end position="163"/>
    </location>
</feature>
<feature type="coiled-coil region" evidence="1">
    <location>
        <begin position="136"/>
        <end position="161"/>
    </location>
</feature>
<keyword id="KW-0175">Coiled coil</keyword>
<keyword id="KW-1185">Reference proteome</keyword>
<gene>
    <name type="ordered locus">MIMI_L134</name>
</gene>
<dbReference type="EMBL" id="AY653733">
    <property type="protein sequence ID" value="AAV50409.1"/>
    <property type="molecule type" value="Genomic_DNA"/>
</dbReference>
<dbReference type="SMR" id="Q5UPL3"/>
<dbReference type="KEGG" id="vg:9924734"/>
<dbReference type="Proteomes" id="UP000001134">
    <property type="component" value="Genome"/>
</dbReference>
<accession>Q5UPL3</accession>
<organismHost>
    <name type="scientific">Acanthamoeba polyphaga</name>
    <name type="common">Amoeba</name>
    <dbReference type="NCBI Taxonomy" id="5757"/>
</organismHost>
<organism>
    <name type="scientific">Acanthamoeba polyphaga mimivirus</name>
    <name type="common">APMV</name>
    <dbReference type="NCBI Taxonomy" id="212035"/>
    <lineage>
        <taxon>Viruses</taxon>
        <taxon>Varidnaviria</taxon>
        <taxon>Bamfordvirae</taxon>
        <taxon>Nucleocytoviricota</taxon>
        <taxon>Megaviricetes</taxon>
        <taxon>Imitervirales</taxon>
        <taxon>Mimiviridae</taxon>
        <taxon>Megamimivirinae</taxon>
        <taxon>Mimivirus</taxon>
        <taxon>Mimivirus bradfordmassiliense</taxon>
    </lineage>
</organism>
<proteinExistence type="predicted"/>
<sequence length="163" mass="19548">MQHNLDEFKELFETMIYTNSELRNLMALIYSSDIKTSKEYFNETNWSNTKNIILSVIKSIKLFDFFHQIQGFCCNLYGSGNIWGRIRFCRLDKINCVPNNPQWITPNDLEMEKFISDNQRVSSKEFRSKALKVISQKYIENHQKEINEHVEKLRTLHKELRYI</sequence>
<evidence type="ECO:0000255" key="1"/>
<reference key="1">
    <citation type="journal article" date="2004" name="Science">
        <title>The 1.2-megabase genome sequence of Mimivirus.</title>
        <authorList>
            <person name="Raoult D."/>
            <person name="Audic S."/>
            <person name="Robert C."/>
            <person name="Abergel C."/>
            <person name="Renesto P."/>
            <person name="Ogata H."/>
            <person name="La Scola B."/>
            <person name="Susan M."/>
            <person name="Claverie J.-M."/>
        </authorList>
    </citation>
    <scope>NUCLEOTIDE SEQUENCE [LARGE SCALE GENOMIC DNA]</scope>
    <source>
        <strain>Rowbotham-Bradford</strain>
    </source>
</reference>